<organism>
    <name type="scientific">Rattus norvegicus</name>
    <name type="common">Rat</name>
    <dbReference type="NCBI Taxonomy" id="10116"/>
    <lineage>
        <taxon>Eukaryota</taxon>
        <taxon>Metazoa</taxon>
        <taxon>Chordata</taxon>
        <taxon>Craniata</taxon>
        <taxon>Vertebrata</taxon>
        <taxon>Euteleostomi</taxon>
        <taxon>Mammalia</taxon>
        <taxon>Eutheria</taxon>
        <taxon>Euarchontoglires</taxon>
        <taxon>Glires</taxon>
        <taxon>Rodentia</taxon>
        <taxon>Myomorpha</taxon>
        <taxon>Muroidea</taxon>
        <taxon>Muridae</taxon>
        <taxon>Murinae</taxon>
        <taxon>Rattus</taxon>
    </lineage>
</organism>
<protein>
    <recommendedName>
        <fullName>Protein S100-A11</fullName>
    </recommendedName>
    <alternativeName>
        <fullName>Calgizzarin</fullName>
    </alternativeName>
    <alternativeName>
        <fullName>S100 calcium-binding protein A11</fullName>
    </alternativeName>
</protein>
<comment type="function">
    <text evidence="1">Facilitates the differentiation and the cornification of keratinocytes.</text>
</comment>
<comment type="subunit">
    <text evidence="1">Homodimer; disulfide-linked.</text>
</comment>
<comment type="subcellular location">
    <subcellularLocation>
        <location>Cytoplasm</location>
    </subcellularLocation>
    <subcellularLocation>
        <location evidence="1">Nucleus</location>
    </subcellularLocation>
</comment>
<comment type="PTM">
    <text evidence="1">Phosphorylation at Thr-5 significantly suppresses homodimerization and promotes association with NCL/nucleolin which induces nuclear translocation.</text>
</comment>
<comment type="miscellaneous">
    <text evidence="1">Binds two calcium ions per molecule with an affinity similar to that of the S100 proteins.</text>
</comment>
<comment type="similarity">
    <text evidence="5">Belongs to the S-100 family.</text>
</comment>
<name>S10AB_RAT</name>
<sequence>MPTETERCIESLIAVFQKYSGKDGNSCHLSKTEFLSFMNTELAAFTKNQKDPGVLDRMMKKLDLNSDGQLDFQEFLNLIGGLAIACHESFLQTSQKRI</sequence>
<dbReference type="EMBL" id="AY688465">
    <property type="protein sequence ID" value="AAT91807.1"/>
    <property type="molecule type" value="mRNA"/>
</dbReference>
<dbReference type="RefSeq" id="NP_001004095.1">
    <property type="nucleotide sequence ID" value="NM_001004095.2"/>
</dbReference>
<dbReference type="RefSeq" id="XP_006232867.1">
    <property type="nucleotide sequence ID" value="XM_006232805.2"/>
</dbReference>
<dbReference type="SMR" id="Q6B345"/>
<dbReference type="BioGRID" id="268753">
    <property type="interactions" value="2"/>
</dbReference>
<dbReference type="FunCoup" id="Q6B345">
    <property type="interactions" value="734"/>
</dbReference>
<dbReference type="IntAct" id="Q6B345">
    <property type="interactions" value="1"/>
</dbReference>
<dbReference type="STRING" id="10116.ENSRNOP00000013393"/>
<dbReference type="iPTMnet" id="Q6B345"/>
<dbReference type="PhosphoSitePlus" id="Q6B345"/>
<dbReference type="PaxDb" id="10116-ENSRNOP00000013393"/>
<dbReference type="Ensembl" id="ENSRNOT00000013393.7">
    <property type="protein sequence ID" value="ENSRNOP00000013393.4"/>
    <property type="gene ID" value="ENSRNOG00000010105.7"/>
</dbReference>
<dbReference type="GeneID" id="445415"/>
<dbReference type="KEGG" id="rno:445415"/>
<dbReference type="UCSC" id="RGD:1303295">
    <property type="organism name" value="rat"/>
</dbReference>
<dbReference type="AGR" id="RGD:1303295"/>
<dbReference type="CTD" id="6282"/>
<dbReference type="RGD" id="1303295">
    <property type="gene designation" value="S100a11"/>
</dbReference>
<dbReference type="eggNOG" id="ENOG502SS6H">
    <property type="taxonomic scope" value="Eukaryota"/>
</dbReference>
<dbReference type="GeneTree" id="ENSGT00940000154172"/>
<dbReference type="HOGENOM" id="CLU_138624_1_0_1"/>
<dbReference type="InParanoid" id="Q6B345"/>
<dbReference type="OMA" id="MACEKCY"/>
<dbReference type="OrthoDB" id="9451669at2759"/>
<dbReference type="PhylomeDB" id="Q6B345"/>
<dbReference type="TreeFam" id="TF332727"/>
<dbReference type="Reactome" id="R-RNO-6798695">
    <property type="pathway name" value="Neutrophil degranulation"/>
</dbReference>
<dbReference type="PRO" id="PR:Q6B345"/>
<dbReference type="Proteomes" id="UP000002494">
    <property type="component" value="Chromosome 2"/>
</dbReference>
<dbReference type="Bgee" id="ENSRNOG00000010105">
    <property type="expression patterns" value="Expressed in lung and 19 other cell types or tissues"/>
</dbReference>
<dbReference type="GO" id="GO:0005737">
    <property type="term" value="C:cytoplasm"/>
    <property type="evidence" value="ECO:0000266"/>
    <property type="project" value="RGD"/>
</dbReference>
<dbReference type="GO" id="GO:0005634">
    <property type="term" value="C:nucleus"/>
    <property type="evidence" value="ECO:0000266"/>
    <property type="project" value="RGD"/>
</dbReference>
<dbReference type="GO" id="GO:0001726">
    <property type="term" value="C:ruffle"/>
    <property type="evidence" value="ECO:0000266"/>
    <property type="project" value="RGD"/>
</dbReference>
<dbReference type="GO" id="GO:0005509">
    <property type="term" value="F:calcium ion binding"/>
    <property type="evidence" value="ECO:0000318"/>
    <property type="project" value="GO_Central"/>
</dbReference>
<dbReference type="GO" id="GO:0048306">
    <property type="term" value="F:calcium-dependent protein binding"/>
    <property type="evidence" value="ECO:0000266"/>
    <property type="project" value="RGD"/>
</dbReference>
<dbReference type="GO" id="GO:0042803">
    <property type="term" value="F:protein homodimerization activity"/>
    <property type="evidence" value="ECO:0000266"/>
    <property type="project" value="RGD"/>
</dbReference>
<dbReference type="GO" id="GO:0044548">
    <property type="term" value="F:S100 protein binding"/>
    <property type="evidence" value="ECO:0000266"/>
    <property type="project" value="RGD"/>
</dbReference>
<dbReference type="GO" id="GO:0014911">
    <property type="term" value="P:positive regulation of smooth muscle cell migration"/>
    <property type="evidence" value="ECO:0000266"/>
    <property type="project" value="RGD"/>
</dbReference>
<dbReference type="GO" id="GO:0042127">
    <property type="term" value="P:regulation of cell population proliferation"/>
    <property type="evidence" value="ECO:0007669"/>
    <property type="project" value="InterPro"/>
</dbReference>
<dbReference type="CDD" id="cd05023">
    <property type="entry name" value="S-100A11"/>
    <property type="match status" value="1"/>
</dbReference>
<dbReference type="Gene3D" id="1.10.238.10">
    <property type="entry name" value="EF-hand"/>
    <property type="match status" value="1"/>
</dbReference>
<dbReference type="InterPro" id="IPR011992">
    <property type="entry name" value="EF-hand-dom_pair"/>
</dbReference>
<dbReference type="InterPro" id="IPR018247">
    <property type="entry name" value="EF_Hand_1_Ca_BS"/>
</dbReference>
<dbReference type="InterPro" id="IPR002048">
    <property type="entry name" value="EF_hand_dom"/>
</dbReference>
<dbReference type="InterPro" id="IPR001751">
    <property type="entry name" value="S100/CaBP7/8-like_CS"/>
</dbReference>
<dbReference type="InterPro" id="IPR013787">
    <property type="entry name" value="S100_Ca-bd_sub"/>
</dbReference>
<dbReference type="InterPro" id="IPR028482">
    <property type="entry name" value="S100A11"/>
</dbReference>
<dbReference type="PANTHER" id="PTHR11639:SF60">
    <property type="entry name" value="PROTEIN S100-A11"/>
    <property type="match status" value="1"/>
</dbReference>
<dbReference type="PANTHER" id="PTHR11639">
    <property type="entry name" value="S100 CALCIUM-BINDING PROTEIN"/>
    <property type="match status" value="1"/>
</dbReference>
<dbReference type="Pfam" id="PF00036">
    <property type="entry name" value="EF-hand_1"/>
    <property type="match status" value="1"/>
</dbReference>
<dbReference type="Pfam" id="PF01023">
    <property type="entry name" value="S_100"/>
    <property type="match status" value="1"/>
</dbReference>
<dbReference type="SMART" id="SM00054">
    <property type="entry name" value="EFh"/>
    <property type="match status" value="1"/>
</dbReference>
<dbReference type="SMART" id="SM01394">
    <property type="entry name" value="S_100"/>
    <property type="match status" value="1"/>
</dbReference>
<dbReference type="SUPFAM" id="SSF47473">
    <property type="entry name" value="EF-hand"/>
    <property type="match status" value="1"/>
</dbReference>
<dbReference type="PROSITE" id="PS00018">
    <property type="entry name" value="EF_HAND_1"/>
    <property type="match status" value="1"/>
</dbReference>
<dbReference type="PROSITE" id="PS50222">
    <property type="entry name" value="EF_HAND_2"/>
    <property type="match status" value="1"/>
</dbReference>
<dbReference type="PROSITE" id="PS00303">
    <property type="entry name" value="S100_CABP"/>
    <property type="match status" value="1"/>
</dbReference>
<gene>
    <name type="primary">S100a11</name>
</gene>
<keyword id="KW-0007">Acetylation</keyword>
<keyword id="KW-0106">Calcium</keyword>
<keyword id="KW-0963">Cytoplasm</keyword>
<keyword id="KW-1015">Disulfide bond</keyword>
<keyword id="KW-0479">Metal-binding</keyword>
<keyword id="KW-0539">Nucleus</keyword>
<keyword id="KW-0597">Phosphoprotein</keyword>
<keyword id="KW-1185">Reference proteome</keyword>
<keyword id="KW-0677">Repeat</keyword>
<feature type="chain" id="PRO_0000144013" description="Protein S100-A11">
    <location>
        <begin position="1"/>
        <end position="98"/>
    </location>
</feature>
<feature type="domain" description="EF-hand 1" evidence="5">
    <location>
        <begin position="12"/>
        <end position="47"/>
    </location>
</feature>
<feature type="domain" description="EF-hand 2" evidence="4">
    <location>
        <begin position="50"/>
        <end position="85"/>
    </location>
</feature>
<feature type="binding site" evidence="5">
    <location>
        <position position="26"/>
    </location>
    <ligand>
        <name>Ca(2+)</name>
        <dbReference type="ChEBI" id="CHEBI:29108"/>
        <label>1</label>
        <note>low affinity</note>
    </ligand>
</feature>
<feature type="binding site" evidence="5">
    <location>
        <position position="28"/>
    </location>
    <ligand>
        <name>Ca(2+)</name>
        <dbReference type="ChEBI" id="CHEBI:29108"/>
        <label>1</label>
        <note>low affinity</note>
    </ligand>
</feature>
<feature type="binding site" evidence="5">
    <location>
        <position position="33"/>
    </location>
    <ligand>
        <name>Ca(2+)</name>
        <dbReference type="ChEBI" id="CHEBI:29108"/>
        <label>1</label>
        <note>low affinity</note>
    </ligand>
</feature>
<feature type="binding site" evidence="4">
    <location>
        <position position="63"/>
    </location>
    <ligand>
        <name>Ca(2+)</name>
        <dbReference type="ChEBI" id="CHEBI:29108"/>
        <label>2</label>
        <note>high affinity</note>
    </ligand>
</feature>
<feature type="binding site" evidence="4">
    <location>
        <position position="65"/>
    </location>
    <ligand>
        <name>Ca(2+)</name>
        <dbReference type="ChEBI" id="CHEBI:29108"/>
        <label>2</label>
        <note>high affinity</note>
    </ligand>
</feature>
<feature type="binding site" evidence="4">
    <location>
        <position position="67"/>
    </location>
    <ligand>
        <name>Ca(2+)</name>
        <dbReference type="ChEBI" id="CHEBI:29108"/>
        <label>2</label>
        <note>high affinity</note>
    </ligand>
</feature>
<feature type="binding site" evidence="4">
    <location>
        <position position="69"/>
    </location>
    <ligand>
        <name>Ca(2+)</name>
        <dbReference type="ChEBI" id="CHEBI:29108"/>
        <label>2</label>
        <note>high affinity</note>
    </ligand>
</feature>
<feature type="binding site" evidence="4">
    <location>
        <position position="74"/>
    </location>
    <ligand>
        <name>Ca(2+)</name>
        <dbReference type="ChEBI" id="CHEBI:29108"/>
        <label>2</label>
        <note>high affinity</note>
    </ligand>
</feature>
<feature type="modified residue" description="Phosphothreonine" evidence="2">
    <location>
        <position position="5"/>
    </location>
</feature>
<feature type="modified residue" description="N6-acetyllysine" evidence="3">
    <location>
        <position position="22"/>
    </location>
</feature>
<feature type="disulfide bond" description="Interchain" evidence="1">
    <location>
        <position position="8"/>
    </location>
</feature>
<proteinExistence type="inferred from homology"/>
<evidence type="ECO:0000250" key="1"/>
<evidence type="ECO:0000250" key="2">
    <source>
        <dbReference type="UniProtKB" id="P31949"/>
    </source>
</evidence>
<evidence type="ECO:0000250" key="3">
    <source>
        <dbReference type="UniProtKB" id="P50543"/>
    </source>
</evidence>
<evidence type="ECO:0000255" key="4">
    <source>
        <dbReference type="PROSITE-ProRule" id="PRU00448"/>
    </source>
</evidence>
<evidence type="ECO:0000305" key="5"/>
<accession>Q6B345</accession>
<reference key="1">
    <citation type="submission" date="2004-07" db="EMBL/GenBank/DDBJ databases">
        <title>Rat S100 calcium-binding protein A11 (calgizzarin) mRNA.</title>
        <authorList>
            <person name="Hesse E.M.M."/>
            <person name="Wiehler W.B."/>
            <person name="Pho M.V.C."/>
            <person name="Walsh M.P."/>
        </authorList>
    </citation>
    <scope>NUCLEOTIDE SEQUENCE [MRNA]</scope>
    <source>
        <strain>Brown Norway</strain>
        <tissue>Brain</tissue>
    </source>
</reference>